<comment type="function">
    <text evidence="1">Catalyzes the transfer of a dimethylallyl group onto the adenine at position 37 in tRNAs that read codons beginning with uridine, leading to the formation of N6-(dimethylallyl)adenosine (i(6)A).</text>
</comment>
<comment type="catalytic activity">
    <reaction evidence="1">
        <text>adenosine(37) in tRNA + dimethylallyl diphosphate = N(6)-dimethylallyladenosine(37) in tRNA + diphosphate</text>
        <dbReference type="Rhea" id="RHEA:26482"/>
        <dbReference type="Rhea" id="RHEA-COMP:10162"/>
        <dbReference type="Rhea" id="RHEA-COMP:10375"/>
        <dbReference type="ChEBI" id="CHEBI:33019"/>
        <dbReference type="ChEBI" id="CHEBI:57623"/>
        <dbReference type="ChEBI" id="CHEBI:74411"/>
        <dbReference type="ChEBI" id="CHEBI:74415"/>
        <dbReference type="EC" id="2.5.1.75"/>
    </reaction>
</comment>
<comment type="cofactor">
    <cofactor evidence="1">
        <name>Mg(2+)</name>
        <dbReference type="ChEBI" id="CHEBI:18420"/>
    </cofactor>
</comment>
<comment type="subunit">
    <text evidence="1">Monomer.</text>
</comment>
<comment type="similarity">
    <text evidence="1">Belongs to the IPP transferase family.</text>
</comment>
<proteinExistence type="inferred from homology"/>
<accession>Q720C8</accession>
<gene>
    <name evidence="1" type="primary">miaA</name>
    <name type="ordered locus">LMOf2365_1311</name>
</gene>
<dbReference type="EC" id="2.5.1.75" evidence="1"/>
<dbReference type="EMBL" id="AE017262">
    <property type="protein sequence ID" value="AAT04086.1"/>
    <property type="molecule type" value="Genomic_DNA"/>
</dbReference>
<dbReference type="RefSeq" id="WP_003726658.1">
    <property type="nucleotide sequence ID" value="NC_002973.6"/>
</dbReference>
<dbReference type="SMR" id="Q720C8"/>
<dbReference type="KEGG" id="lmf:LMOf2365_1311"/>
<dbReference type="HOGENOM" id="CLU_032616_0_1_9"/>
<dbReference type="GO" id="GO:0005524">
    <property type="term" value="F:ATP binding"/>
    <property type="evidence" value="ECO:0007669"/>
    <property type="project" value="UniProtKB-UniRule"/>
</dbReference>
<dbReference type="GO" id="GO:0052381">
    <property type="term" value="F:tRNA dimethylallyltransferase activity"/>
    <property type="evidence" value="ECO:0007669"/>
    <property type="project" value="UniProtKB-UniRule"/>
</dbReference>
<dbReference type="GO" id="GO:0006400">
    <property type="term" value="P:tRNA modification"/>
    <property type="evidence" value="ECO:0007669"/>
    <property type="project" value="TreeGrafter"/>
</dbReference>
<dbReference type="FunFam" id="1.10.20.140:FF:000001">
    <property type="entry name" value="tRNA dimethylallyltransferase"/>
    <property type="match status" value="1"/>
</dbReference>
<dbReference type="Gene3D" id="1.10.20.140">
    <property type="match status" value="1"/>
</dbReference>
<dbReference type="Gene3D" id="3.40.50.300">
    <property type="entry name" value="P-loop containing nucleotide triphosphate hydrolases"/>
    <property type="match status" value="1"/>
</dbReference>
<dbReference type="HAMAP" id="MF_00185">
    <property type="entry name" value="IPP_trans"/>
    <property type="match status" value="1"/>
</dbReference>
<dbReference type="InterPro" id="IPR039657">
    <property type="entry name" value="Dimethylallyltransferase"/>
</dbReference>
<dbReference type="InterPro" id="IPR018022">
    <property type="entry name" value="IPT"/>
</dbReference>
<dbReference type="InterPro" id="IPR027417">
    <property type="entry name" value="P-loop_NTPase"/>
</dbReference>
<dbReference type="NCBIfam" id="TIGR00174">
    <property type="entry name" value="miaA"/>
    <property type="match status" value="1"/>
</dbReference>
<dbReference type="PANTHER" id="PTHR11088">
    <property type="entry name" value="TRNA DIMETHYLALLYLTRANSFERASE"/>
    <property type="match status" value="1"/>
</dbReference>
<dbReference type="PANTHER" id="PTHR11088:SF60">
    <property type="entry name" value="TRNA DIMETHYLALLYLTRANSFERASE"/>
    <property type="match status" value="1"/>
</dbReference>
<dbReference type="Pfam" id="PF01715">
    <property type="entry name" value="IPPT"/>
    <property type="match status" value="1"/>
</dbReference>
<dbReference type="SUPFAM" id="SSF52540">
    <property type="entry name" value="P-loop containing nucleoside triphosphate hydrolases"/>
    <property type="match status" value="2"/>
</dbReference>
<organism>
    <name type="scientific">Listeria monocytogenes serotype 4b (strain F2365)</name>
    <dbReference type="NCBI Taxonomy" id="265669"/>
    <lineage>
        <taxon>Bacteria</taxon>
        <taxon>Bacillati</taxon>
        <taxon>Bacillota</taxon>
        <taxon>Bacilli</taxon>
        <taxon>Bacillales</taxon>
        <taxon>Listeriaceae</taxon>
        <taxon>Listeria</taxon>
    </lineage>
</organism>
<evidence type="ECO:0000255" key="1">
    <source>
        <dbReference type="HAMAP-Rule" id="MF_00185"/>
    </source>
</evidence>
<reference key="1">
    <citation type="journal article" date="2004" name="Nucleic Acids Res.">
        <title>Whole genome comparisons of serotype 4b and 1/2a strains of the food-borne pathogen Listeria monocytogenes reveal new insights into the core genome components of this species.</title>
        <authorList>
            <person name="Nelson K.E."/>
            <person name="Fouts D.E."/>
            <person name="Mongodin E.F."/>
            <person name="Ravel J."/>
            <person name="DeBoy R.T."/>
            <person name="Kolonay J.F."/>
            <person name="Rasko D.A."/>
            <person name="Angiuoli S.V."/>
            <person name="Gill S.R."/>
            <person name="Paulsen I.T."/>
            <person name="Peterson J.D."/>
            <person name="White O."/>
            <person name="Nelson W.C."/>
            <person name="Nierman W.C."/>
            <person name="Beanan M.J."/>
            <person name="Brinkac L.M."/>
            <person name="Daugherty S.C."/>
            <person name="Dodson R.J."/>
            <person name="Durkin A.S."/>
            <person name="Madupu R."/>
            <person name="Haft D.H."/>
            <person name="Selengut J."/>
            <person name="Van Aken S.E."/>
            <person name="Khouri H.M."/>
            <person name="Fedorova N."/>
            <person name="Forberger H.A."/>
            <person name="Tran B."/>
            <person name="Kathariou S."/>
            <person name="Wonderling L.D."/>
            <person name="Uhlich G.A."/>
            <person name="Bayles D.O."/>
            <person name="Luchansky J.B."/>
            <person name="Fraser C.M."/>
        </authorList>
    </citation>
    <scope>NUCLEOTIDE SEQUENCE [LARGE SCALE GENOMIC DNA]</scope>
    <source>
        <strain>F2365</strain>
    </source>
</reference>
<keyword id="KW-0067">ATP-binding</keyword>
<keyword id="KW-0460">Magnesium</keyword>
<keyword id="KW-0547">Nucleotide-binding</keyword>
<keyword id="KW-0808">Transferase</keyword>
<keyword id="KW-0819">tRNA processing</keyword>
<sequence>MSKIPVIVIVGPTAVGKTSLSIELAKKLDGEIISGDSMQVYRGLDIGTAKITPEEMDGIKHYLIDVTNPSEPFTAAKFQIETRKCIETIHQAGRLPIIVGGTGLYIQSVFYDYDFGNVSEDKAYRAELEQLDKTVLWQMLEQKDPESAAQIHENNKRRVIRALEVMHLTGKPFSEYQVNNVLNDRYQPLFLGLDLDRALLYERINQRVNLMFEEGLVTEAKKLYEQHLVDVPAVRGIGYKELFPYFEGKSSLEEAKELIQKNSRHFAKRQLTWFRNRMDIDWIQAGVSSTESEALNKATTFLTAK</sequence>
<protein>
    <recommendedName>
        <fullName evidence="1">tRNA dimethylallyltransferase</fullName>
        <ecNumber evidence="1">2.5.1.75</ecNumber>
    </recommendedName>
    <alternativeName>
        <fullName evidence="1">Dimethylallyl diphosphate:tRNA dimethylallyltransferase</fullName>
        <shortName evidence="1">DMAPP:tRNA dimethylallyltransferase</shortName>
        <shortName evidence="1">DMATase</shortName>
    </alternativeName>
    <alternativeName>
        <fullName evidence="1">Isopentenyl-diphosphate:tRNA isopentenyltransferase</fullName>
        <shortName evidence="1">IPP transferase</shortName>
        <shortName evidence="1">IPPT</shortName>
        <shortName evidence="1">IPTase</shortName>
    </alternativeName>
</protein>
<feature type="chain" id="PRO_0000163935" description="tRNA dimethylallyltransferase">
    <location>
        <begin position="1"/>
        <end position="305"/>
    </location>
</feature>
<feature type="region of interest" description="Interaction with substrate tRNA" evidence="1">
    <location>
        <begin position="36"/>
        <end position="39"/>
    </location>
</feature>
<feature type="binding site" evidence="1">
    <location>
        <begin position="11"/>
        <end position="18"/>
    </location>
    <ligand>
        <name>ATP</name>
        <dbReference type="ChEBI" id="CHEBI:30616"/>
    </ligand>
</feature>
<feature type="binding site" evidence="1">
    <location>
        <begin position="13"/>
        <end position="18"/>
    </location>
    <ligand>
        <name>substrate</name>
    </ligand>
</feature>
<feature type="site" description="Interaction with substrate tRNA" evidence="1">
    <location>
        <position position="102"/>
    </location>
</feature>
<name>MIAA_LISMF</name>